<accession>Q864Q2</accession>
<keyword id="KW-0010">Activator</keyword>
<keyword id="KW-0112">Calmodulin-binding</keyword>
<keyword id="KW-0963">Cytoplasm</keyword>
<keyword id="KW-0221">Differentiation</keyword>
<keyword id="KW-0238">DNA-binding</keyword>
<keyword id="KW-0539">Nucleus</keyword>
<keyword id="KW-0726">Sexual differentiation</keyword>
<keyword id="KW-0804">Transcription</keyword>
<keyword id="KW-0805">Transcription regulation</keyword>
<gene>
    <name type="primary">SRY</name>
    <name type="synonym">TDF</name>
</gene>
<reference key="1">
    <citation type="journal article" date="2003" name="Mammal Study">
        <title>SRY gene structure and phylogeny in the cetacean species.</title>
        <authorList>
            <person name="Nishida S."/>
            <person name="Pastene L.A."/>
            <person name="Goto M."/>
            <person name="Koike H."/>
        </authorList>
    </citation>
    <scope>NUCLEOTIDE SEQUENCE [GENOMIC DNA]</scope>
</reference>
<sequence length="196" mass="22487">MFRIVNGEDYSPAVQQRNILDFGKAPSLLWTDNGSSNDRCDTGGNCRESGQDRVKRPMNAFIVWSRDQRRKVALENPQMQNSEISKRLGYDWKMLTEAEKQPFFEEAQRLRAMHRDKYPGYKYRPRRKAKEATEIASRRLFSTVQPNAHRGDLVPLHIQGHTFTNGKPVKPLTAHEHKQLTPATGASQQSDKPAPQ</sequence>
<organism>
    <name type="scientific">Phocoena phocoena</name>
    <name type="common">Harbor porpoise</name>
    <dbReference type="NCBI Taxonomy" id="9742"/>
    <lineage>
        <taxon>Eukaryota</taxon>
        <taxon>Metazoa</taxon>
        <taxon>Chordata</taxon>
        <taxon>Craniata</taxon>
        <taxon>Vertebrata</taxon>
        <taxon>Euteleostomi</taxon>
        <taxon>Mammalia</taxon>
        <taxon>Eutheria</taxon>
        <taxon>Laurasiatheria</taxon>
        <taxon>Artiodactyla</taxon>
        <taxon>Whippomorpha</taxon>
        <taxon>Cetacea</taxon>
        <taxon>Odontoceti</taxon>
        <taxon>Phocoenidae</taxon>
        <taxon>Phocoena</taxon>
    </lineage>
</organism>
<comment type="function">
    <text evidence="1 2">Transcriptional regulator that controls a genetic switch in male development. It is necessary and sufficient for initiating male sex determination by directing the development of supporting cell precursors (pre-Sertoli cells) as Sertoli rather than granulosa cells. Involved in different aspects of gene regulation including promoter activation or repression. Binds to the DNA consensus sequence 5'-[AT]AACAA[AT]-3'. SRY HMG box recognizes DNA by partial intercalation in the minor groove and promotes DNA bending. Also involved in pre-mRNA splicing (By similarity). In male adult brain involved in the maintenance of motor functions of dopaminergic neurons (By similarity).</text>
</comment>
<comment type="subunit">
    <text evidence="2">Interacts with CALM, EP300, HDAC3, KPNB1, ZNF208 isoform KRAB-O, PARP1, SLC9A3R2 and WT1. The interaction with EP300 modulates its DNA-binding activity. The interaction with KPNB1 is sensitive to dissociation by Ran in the GTP-bound form. Interaction with PARP1 impaired its DNA-binding activity.</text>
</comment>
<comment type="subcellular location">
    <subcellularLocation>
        <location evidence="2">Nucleus speckle</location>
    </subcellularLocation>
    <subcellularLocation>
        <location evidence="2">Cytoplasm</location>
    </subcellularLocation>
    <subcellularLocation>
        <location evidence="2">Nucleus</location>
    </subcellularLocation>
</comment>
<comment type="similarity">
    <text evidence="5">Belongs to the SRY family.</text>
</comment>
<comment type="online information" name="Protein Spotlight">
    <link uri="https://www.proteinspotlight.org/back_issues/080"/>
    <text>The tenuous nature of sex - Issue 80 of March 2007</text>
</comment>
<feature type="chain" id="PRO_0000048701" description="Sex-determining region Y protein">
    <location>
        <begin position="1"/>
        <end position="196"/>
    </location>
</feature>
<feature type="DNA-binding region" description="HMG box" evidence="3">
    <location>
        <begin position="54"/>
        <end position="122"/>
    </location>
</feature>
<feature type="region of interest" description="Disordered" evidence="4">
    <location>
        <begin position="33"/>
        <end position="52"/>
    </location>
</feature>
<feature type="region of interest" description="Disordered" evidence="4">
    <location>
        <begin position="164"/>
        <end position="196"/>
    </location>
</feature>
<feature type="compositionally biased region" description="Polar residues" evidence="4">
    <location>
        <begin position="181"/>
        <end position="196"/>
    </location>
</feature>
<evidence type="ECO:0000250" key="1">
    <source>
        <dbReference type="UniProtKB" id="P36394"/>
    </source>
</evidence>
<evidence type="ECO:0000250" key="2">
    <source>
        <dbReference type="UniProtKB" id="Q05066"/>
    </source>
</evidence>
<evidence type="ECO:0000255" key="3">
    <source>
        <dbReference type="PROSITE-ProRule" id="PRU00267"/>
    </source>
</evidence>
<evidence type="ECO:0000256" key="4">
    <source>
        <dbReference type="SAM" id="MobiDB-lite"/>
    </source>
</evidence>
<evidence type="ECO:0000305" key="5"/>
<name>SRY_PHOPH</name>
<proteinExistence type="inferred from homology"/>
<dbReference type="EMBL" id="AB108519">
    <property type="protein sequence ID" value="BAC75651.1"/>
    <property type="molecule type" value="Genomic_DNA"/>
</dbReference>
<dbReference type="SMR" id="Q864Q2"/>
<dbReference type="GO" id="GO:0005737">
    <property type="term" value="C:cytoplasm"/>
    <property type="evidence" value="ECO:0007669"/>
    <property type="project" value="UniProtKB-SubCell"/>
</dbReference>
<dbReference type="GO" id="GO:0016607">
    <property type="term" value="C:nuclear speck"/>
    <property type="evidence" value="ECO:0007669"/>
    <property type="project" value="UniProtKB-SubCell"/>
</dbReference>
<dbReference type="GO" id="GO:0005634">
    <property type="term" value="C:nucleus"/>
    <property type="evidence" value="ECO:0000250"/>
    <property type="project" value="UniProtKB"/>
</dbReference>
<dbReference type="GO" id="GO:0005516">
    <property type="term" value="F:calmodulin binding"/>
    <property type="evidence" value="ECO:0007669"/>
    <property type="project" value="UniProtKB-KW"/>
</dbReference>
<dbReference type="GO" id="GO:0001228">
    <property type="term" value="F:DNA-binding transcription activator activity, RNA polymerase II-specific"/>
    <property type="evidence" value="ECO:0007669"/>
    <property type="project" value="TreeGrafter"/>
</dbReference>
<dbReference type="GO" id="GO:0000978">
    <property type="term" value="F:RNA polymerase II cis-regulatory region sequence-specific DNA binding"/>
    <property type="evidence" value="ECO:0007669"/>
    <property type="project" value="TreeGrafter"/>
</dbReference>
<dbReference type="GO" id="GO:0030154">
    <property type="term" value="P:cell differentiation"/>
    <property type="evidence" value="ECO:0007669"/>
    <property type="project" value="UniProtKB-KW"/>
</dbReference>
<dbReference type="GO" id="GO:0030238">
    <property type="term" value="P:male sex determination"/>
    <property type="evidence" value="ECO:0007669"/>
    <property type="project" value="InterPro"/>
</dbReference>
<dbReference type="GO" id="GO:0007548">
    <property type="term" value="P:sex differentiation"/>
    <property type="evidence" value="ECO:0007669"/>
    <property type="project" value="UniProtKB-KW"/>
</dbReference>
<dbReference type="CDD" id="cd22034">
    <property type="entry name" value="HMG-box_SoxA_SRY"/>
    <property type="match status" value="1"/>
</dbReference>
<dbReference type="FunFam" id="1.10.30.10:FF:000002">
    <property type="entry name" value="transcription factor Sox-2"/>
    <property type="match status" value="1"/>
</dbReference>
<dbReference type="Gene3D" id="1.10.30.10">
    <property type="entry name" value="High mobility group box domain"/>
    <property type="match status" value="1"/>
</dbReference>
<dbReference type="InterPro" id="IPR009071">
    <property type="entry name" value="HMG_box_dom"/>
</dbReference>
<dbReference type="InterPro" id="IPR036910">
    <property type="entry name" value="HMG_box_dom_sf"/>
</dbReference>
<dbReference type="InterPro" id="IPR017253">
    <property type="entry name" value="SRY"/>
</dbReference>
<dbReference type="InterPro" id="IPR050140">
    <property type="entry name" value="SRY-related_HMG-box_TF-like"/>
</dbReference>
<dbReference type="PANTHER" id="PTHR10270:SF161">
    <property type="entry name" value="SEX-DETERMINING REGION Y PROTEIN"/>
    <property type="match status" value="1"/>
</dbReference>
<dbReference type="PANTHER" id="PTHR10270">
    <property type="entry name" value="SOX TRANSCRIPTION FACTOR"/>
    <property type="match status" value="1"/>
</dbReference>
<dbReference type="Pfam" id="PF00505">
    <property type="entry name" value="HMG_box"/>
    <property type="match status" value="1"/>
</dbReference>
<dbReference type="PIRSF" id="PIRSF037653">
    <property type="entry name" value="SRY"/>
    <property type="match status" value="1"/>
</dbReference>
<dbReference type="SMART" id="SM00398">
    <property type="entry name" value="HMG"/>
    <property type="match status" value="1"/>
</dbReference>
<dbReference type="SUPFAM" id="SSF47095">
    <property type="entry name" value="HMG-box"/>
    <property type="match status" value="1"/>
</dbReference>
<dbReference type="PROSITE" id="PS50118">
    <property type="entry name" value="HMG_BOX_2"/>
    <property type="match status" value="1"/>
</dbReference>
<protein>
    <recommendedName>
        <fullName>Sex-determining region Y protein</fullName>
    </recommendedName>
    <alternativeName>
        <fullName>Testis-determining factor</fullName>
    </alternativeName>
</protein>